<evidence type="ECO:0000255" key="1">
    <source>
        <dbReference type="HAMAP-Rule" id="MF_00069"/>
    </source>
</evidence>
<accession>Q8ZGE1</accession>
<accession>Q0WH55</accession>
<gene>
    <name evidence="1" type="primary">hcp</name>
    <name type="ordered locus">YPO1360</name>
    <name type="ordered locus">y2819</name>
    <name type="ordered locus">YP_1235</name>
</gene>
<name>HCP_YERPE</name>
<comment type="function">
    <text evidence="1">Catalyzes the reduction of hydroxylamine to form NH(3) and H(2)O.</text>
</comment>
<comment type="catalytic activity">
    <reaction evidence="1">
        <text>A + NH4(+) + H2O = hydroxylamine + AH2 + H(+)</text>
        <dbReference type="Rhea" id="RHEA:22052"/>
        <dbReference type="ChEBI" id="CHEBI:13193"/>
        <dbReference type="ChEBI" id="CHEBI:15377"/>
        <dbReference type="ChEBI" id="CHEBI:15378"/>
        <dbReference type="ChEBI" id="CHEBI:15429"/>
        <dbReference type="ChEBI" id="CHEBI:17499"/>
        <dbReference type="ChEBI" id="CHEBI:28938"/>
        <dbReference type="EC" id="1.7.99.1"/>
    </reaction>
</comment>
<comment type="cofactor">
    <cofactor evidence="1">
        <name>[2Fe-2S] cluster</name>
        <dbReference type="ChEBI" id="CHEBI:190135"/>
    </cofactor>
    <text evidence="1">Binds 1 [2Fe-2S] cluster.</text>
</comment>
<comment type="cofactor">
    <cofactor evidence="1">
        <name>hybrid [4Fe-2O-2S] cluster</name>
        <dbReference type="ChEBI" id="CHEBI:60519"/>
    </cofactor>
    <text evidence="1">Binds 1 hybrid [4Fe-2O-2S] cluster.</text>
</comment>
<comment type="subcellular location">
    <subcellularLocation>
        <location evidence="1">Cytoplasm</location>
    </subcellularLocation>
</comment>
<comment type="similarity">
    <text evidence="1">Belongs to the HCP family.</text>
</comment>
<protein>
    <recommendedName>
        <fullName evidence="1">Hydroxylamine reductase</fullName>
        <ecNumber evidence="1">1.7.99.1</ecNumber>
    </recommendedName>
    <alternativeName>
        <fullName evidence="1">Hybrid-cluster protein</fullName>
        <shortName evidence="1">HCP</shortName>
    </alternativeName>
    <alternativeName>
        <fullName evidence="1">Prismane protein</fullName>
    </alternativeName>
</protein>
<feature type="chain" id="PRO_0000151690" description="Hydroxylamine reductase">
    <location>
        <begin position="1"/>
        <end position="550"/>
    </location>
</feature>
<feature type="binding site" evidence="1">
    <location>
        <position position="3"/>
    </location>
    <ligand>
        <name>[2Fe-2S] cluster</name>
        <dbReference type="ChEBI" id="CHEBI:190135"/>
    </ligand>
</feature>
<feature type="binding site" evidence="1">
    <location>
        <position position="6"/>
    </location>
    <ligand>
        <name>[2Fe-2S] cluster</name>
        <dbReference type="ChEBI" id="CHEBI:190135"/>
    </ligand>
</feature>
<feature type="binding site" evidence="1">
    <location>
        <position position="18"/>
    </location>
    <ligand>
        <name>[2Fe-2S] cluster</name>
        <dbReference type="ChEBI" id="CHEBI:190135"/>
    </ligand>
</feature>
<feature type="binding site" evidence="1">
    <location>
        <position position="25"/>
    </location>
    <ligand>
        <name>[2Fe-2S] cluster</name>
        <dbReference type="ChEBI" id="CHEBI:190135"/>
    </ligand>
</feature>
<feature type="binding site" evidence="1">
    <location>
        <position position="249"/>
    </location>
    <ligand>
        <name>hybrid [4Fe-2O-2S] cluster</name>
        <dbReference type="ChEBI" id="CHEBI:60519"/>
    </ligand>
</feature>
<feature type="binding site" evidence="1">
    <location>
        <position position="273"/>
    </location>
    <ligand>
        <name>hybrid [4Fe-2O-2S] cluster</name>
        <dbReference type="ChEBI" id="CHEBI:60519"/>
    </ligand>
</feature>
<feature type="binding site" evidence="1">
    <location>
        <position position="317"/>
    </location>
    <ligand>
        <name>hybrid [4Fe-2O-2S] cluster</name>
        <dbReference type="ChEBI" id="CHEBI:60519"/>
    </ligand>
</feature>
<feature type="binding site" description="via persulfide group" evidence="1">
    <location>
        <position position="405"/>
    </location>
    <ligand>
        <name>hybrid [4Fe-2O-2S] cluster</name>
        <dbReference type="ChEBI" id="CHEBI:60519"/>
    </ligand>
</feature>
<feature type="binding site" evidence="1">
    <location>
        <position position="433"/>
    </location>
    <ligand>
        <name>hybrid [4Fe-2O-2S] cluster</name>
        <dbReference type="ChEBI" id="CHEBI:60519"/>
    </ligand>
</feature>
<feature type="binding site" evidence="1">
    <location>
        <position position="458"/>
    </location>
    <ligand>
        <name>hybrid [4Fe-2O-2S] cluster</name>
        <dbReference type="ChEBI" id="CHEBI:60519"/>
    </ligand>
</feature>
<feature type="binding site" evidence="1">
    <location>
        <position position="492"/>
    </location>
    <ligand>
        <name>hybrid [4Fe-2O-2S] cluster</name>
        <dbReference type="ChEBI" id="CHEBI:60519"/>
    </ligand>
</feature>
<feature type="binding site" evidence="1">
    <location>
        <position position="494"/>
    </location>
    <ligand>
        <name>hybrid [4Fe-2O-2S] cluster</name>
        <dbReference type="ChEBI" id="CHEBI:60519"/>
    </ligand>
</feature>
<feature type="modified residue" description="Cysteine persulfide" evidence="1">
    <location>
        <position position="405"/>
    </location>
</feature>
<dbReference type="EC" id="1.7.99.1" evidence="1"/>
<dbReference type="EMBL" id="AL590842">
    <property type="protein sequence ID" value="CAL20012.1"/>
    <property type="molecule type" value="Genomic_DNA"/>
</dbReference>
<dbReference type="EMBL" id="AE009952">
    <property type="protein sequence ID" value="AAM86370.1"/>
    <property type="molecule type" value="Genomic_DNA"/>
</dbReference>
<dbReference type="EMBL" id="AE017042">
    <property type="protein sequence ID" value="AAS61478.1"/>
    <property type="molecule type" value="Genomic_DNA"/>
</dbReference>
<dbReference type="PIR" id="AB0166">
    <property type="entry name" value="AB0166"/>
</dbReference>
<dbReference type="RefSeq" id="WP_002211359.1">
    <property type="nucleotide sequence ID" value="NZ_WUCM01000027.1"/>
</dbReference>
<dbReference type="RefSeq" id="YP_002346383.1">
    <property type="nucleotide sequence ID" value="NC_003143.1"/>
</dbReference>
<dbReference type="SMR" id="Q8ZGE1"/>
<dbReference type="IntAct" id="Q8ZGE1">
    <property type="interactions" value="3"/>
</dbReference>
<dbReference type="STRING" id="214092.YPO1360"/>
<dbReference type="PaxDb" id="214092-YPO1360"/>
<dbReference type="DNASU" id="1147766"/>
<dbReference type="EnsemblBacteria" id="AAS61478">
    <property type="protein sequence ID" value="AAS61478"/>
    <property type="gene ID" value="YP_1235"/>
</dbReference>
<dbReference type="GeneID" id="57977156"/>
<dbReference type="KEGG" id="ype:YPO1360"/>
<dbReference type="KEGG" id="ypk:y2819"/>
<dbReference type="KEGG" id="ypm:YP_1235"/>
<dbReference type="PATRIC" id="fig|214092.21.peg.1678"/>
<dbReference type="eggNOG" id="COG1151">
    <property type="taxonomic scope" value="Bacteria"/>
</dbReference>
<dbReference type="HOGENOM" id="CLU_038344_2_0_6"/>
<dbReference type="OMA" id="AYAQGMC"/>
<dbReference type="OrthoDB" id="9761526at2"/>
<dbReference type="Proteomes" id="UP000000815">
    <property type="component" value="Chromosome"/>
</dbReference>
<dbReference type="Proteomes" id="UP000001019">
    <property type="component" value="Chromosome"/>
</dbReference>
<dbReference type="Proteomes" id="UP000002490">
    <property type="component" value="Chromosome"/>
</dbReference>
<dbReference type="GO" id="GO:0005737">
    <property type="term" value="C:cytoplasm"/>
    <property type="evidence" value="ECO:0007669"/>
    <property type="project" value="UniProtKB-SubCell"/>
</dbReference>
<dbReference type="GO" id="GO:0051537">
    <property type="term" value="F:2 iron, 2 sulfur cluster binding"/>
    <property type="evidence" value="ECO:0007669"/>
    <property type="project" value="UniProtKB-KW"/>
</dbReference>
<dbReference type="GO" id="GO:0050418">
    <property type="term" value="F:hydroxylamine reductase activity"/>
    <property type="evidence" value="ECO:0000318"/>
    <property type="project" value="GO_Central"/>
</dbReference>
<dbReference type="GO" id="GO:0046872">
    <property type="term" value="F:metal ion binding"/>
    <property type="evidence" value="ECO:0007669"/>
    <property type="project" value="UniProtKB-KW"/>
</dbReference>
<dbReference type="GO" id="GO:0004601">
    <property type="term" value="F:peroxidase activity"/>
    <property type="evidence" value="ECO:0000318"/>
    <property type="project" value="GO_Central"/>
</dbReference>
<dbReference type="GO" id="GO:0046210">
    <property type="term" value="P:nitric oxide catabolic process"/>
    <property type="evidence" value="ECO:0000318"/>
    <property type="project" value="GO_Central"/>
</dbReference>
<dbReference type="GO" id="GO:0042542">
    <property type="term" value="P:response to hydrogen peroxide"/>
    <property type="evidence" value="ECO:0000318"/>
    <property type="project" value="GO_Central"/>
</dbReference>
<dbReference type="CDD" id="cd01914">
    <property type="entry name" value="HCP"/>
    <property type="match status" value="1"/>
</dbReference>
<dbReference type="FunFam" id="1.20.1270.20:FF:000001">
    <property type="entry name" value="Hydroxylamine reductase"/>
    <property type="match status" value="1"/>
</dbReference>
<dbReference type="FunFam" id="1.20.1270.20:FF:000002">
    <property type="entry name" value="Hydroxylamine reductase"/>
    <property type="match status" value="1"/>
</dbReference>
<dbReference type="FunFam" id="3.40.50.2030:FF:000001">
    <property type="entry name" value="Hydroxylamine reductase"/>
    <property type="match status" value="1"/>
</dbReference>
<dbReference type="FunFam" id="3.40.50.2030:FF:000002">
    <property type="entry name" value="Hydroxylamine reductase"/>
    <property type="match status" value="1"/>
</dbReference>
<dbReference type="Gene3D" id="1.20.1270.20">
    <property type="match status" value="2"/>
</dbReference>
<dbReference type="Gene3D" id="3.40.50.2030">
    <property type="match status" value="2"/>
</dbReference>
<dbReference type="HAMAP" id="MF_00069">
    <property type="entry name" value="Hydroxylam_reduct"/>
    <property type="match status" value="1"/>
</dbReference>
<dbReference type="InterPro" id="IPR004137">
    <property type="entry name" value="HCP/CODH"/>
</dbReference>
<dbReference type="InterPro" id="IPR010048">
    <property type="entry name" value="Hydroxylam_reduct"/>
</dbReference>
<dbReference type="InterPro" id="IPR016099">
    <property type="entry name" value="Prismane-like_a/b-sand"/>
</dbReference>
<dbReference type="InterPro" id="IPR011254">
    <property type="entry name" value="Prismane-like_sf"/>
</dbReference>
<dbReference type="InterPro" id="IPR016100">
    <property type="entry name" value="Prismane_a-bundle"/>
</dbReference>
<dbReference type="NCBIfam" id="TIGR01703">
    <property type="entry name" value="hybrid_clust"/>
    <property type="match status" value="1"/>
</dbReference>
<dbReference type="NCBIfam" id="NF003658">
    <property type="entry name" value="PRK05290.1"/>
    <property type="match status" value="1"/>
</dbReference>
<dbReference type="PANTHER" id="PTHR30109">
    <property type="entry name" value="HYDROXYLAMINE REDUCTASE"/>
    <property type="match status" value="1"/>
</dbReference>
<dbReference type="PANTHER" id="PTHR30109:SF0">
    <property type="entry name" value="HYDROXYLAMINE REDUCTASE"/>
    <property type="match status" value="1"/>
</dbReference>
<dbReference type="Pfam" id="PF03063">
    <property type="entry name" value="Prismane"/>
    <property type="match status" value="1"/>
</dbReference>
<dbReference type="PIRSF" id="PIRSF000076">
    <property type="entry name" value="HCP"/>
    <property type="match status" value="1"/>
</dbReference>
<dbReference type="SUPFAM" id="SSF56821">
    <property type="entry name" value="Prismane protein-like"/>
    <property type="match status" value="1"/>
</dbReference>
<proteinExistence type="inferred from homology"/>
<keyword id="KW-0001">2Fe-2S</keyword>
<keyword id="KW-0963">Cytoplasm</keyword>
<keyword id="KW-0408">Iron</keyword>
<keyword id="KW-0411">Iron-sulfur</keyword>
<keyword id="KW-0479">Metal-binding</keyword>
<keyword id="KW-0560">Oxidoreductase</keyword>
<keyword id="KW-1185">Reference proteome</keyword>
<sequence length="550" mass="60386">MFCVQCEQTIRTPAGNGCSYAQGMCGKTAETSDLQDLLVAVLQGLSAWALQARELGIIDSQIDSFAPRAFFSTLTNVNFDSDRIVEYAKDAILLRHSLAVRCRLLDSTITVDHPLAELQLVADDIPSLLQQSQQFALNNDKADVGDDIHGLRMLCLYGLKGAAAYMEHAHVLGQSDEQIYAEYHAYMAWLGTQPRDVDTLLNNAMGIGKMNFNVMAILDQGETQAYGDPQPTSVNVRPVAGKAILISGHDLKDLHMLLEQTQGTGINIYTHGEMLPAHGYPELKRYPHLVGNYGSGWQNQQTEFAKFPGPILMTSNCIIDPNVGNYGDRIWTRSIVGWPGVNHLDGDNFAPVIEQALGMAGFPYSELEHLITVGFGRQTLLNAADTVIDLVASKKLRHVFLVGGCDGSRTERSYFTDFARSVPQDCIIMTLACGKYRFNKLDFGTLEGLPRLLDVGQCNDAYAAIMLAVKLSEKLGCTVNDLPLSLVLSWFEQKAIVILLTLLSLGVKNIYTGPTAPGFLTDNLMAILYEKFGMQPITTVEQDMQAILGH</sequence>
<organism>
    <name type="scientific">Yersinia pestis</name>
    <dbReference type="NCBI Taxonomy" id="632"/>
    <lineage>
        <taxon>Bacteria</taxon>
        <taxon>Pseudomonadati</taxon>
        <taxon>Pseudomonadota</taxon>
        <taxon>Gammaproteobacteria</taxon>
        <taxon>Enterobacterales</taxon>
        <taxon>Yersiniaceae</taxon>
        <taxon>Yersinia</taxon>
    </lineage>
</organism>
<reference key="1">
    <citation type="journal article" date="2001" name="Nature">
        <title>Genome sequence of Yersinia pestis, the causative agent of plague.</title>
        <authorList>
            <person name="Parkhill J."/>
            <person name="Wren B.W."/>
            <person name="Thomson N.R."/>
            <person name="Titball R.W."/>
            <person name="Holden M.T.G."/>
            <person name="Prentice M.B."/>
            <person name="Sebaihia M."/>
            <person name="James K.D."/>
            <person name="Churcher C.M."/>
            <person name="Mungall K.L."/>
            <person name="Baker S."/>
            <person name="Basham D."/>
            <person name="Bentley S.D."/>
            <person name="Brooks K."/>
            <person name="Cerdeno-Tarraga A.-M."/>
            <person name="Chillingworth T."/>
            <person name="Cronin A."/>
            <person name="Davies R.M."/>
            <person name="Davis P."/>
            <person name="Dougan G."/>
            <person name="Feltwell T."/>
            <person name="Hamlin N."/>
            <person name="Holroyd S."/>
            <person name="Jagels K."/>
            <person name="Karlyshev A.V."/>
            <person name="Leather S."/>
            <person name="Moule S."/>
            <person name="Oyston P.C.F."/>
            <person name="Quail M.A."/>
            <person name="Rutherford K.M."/>
            <person name="Simmonds M."/>
            <person name="Skelton J."/>
            <person name="Stevens K."/>
            <person name="Whitehead S."/>
            <person name="Barrell B.G."/>
        </authorList>
    </citation>
    <scope>NUCLEOTIDE SEQUENCE [LARGE SCALE GENOMIC DNA]</scope>
    <source>
        <strain>CO-92 / Biovar Orientalis</strain>
    </source>
</reference>
<reference key="2">
    <citation type="journal article" date="2002" name="J. Bacteriol.">
        <title>Genome sequence of Yersinia pestis KIM.</title>
        <authorList>
            <person name="Deng W."/>
            <person name="Burland V."/>
            <person name="Plunkett G. III"/>
            <person name="Boutin A."/>
            <person name="Mayhew G.F."/>
            <person name="Liss P."/>
            <person name="Perna N.T."/>
            <person name="Rose D.J."/>
            <person name="Mau B."/>
            <person name="Zhou S."/>
            <person name="Schwartz D.C."/>
            <person name="Fetherston J.D."/>
            <person name="Lindler L.E."/>
            <person name="Brubaker R.R."/>
            <person name="Plano G.V."/>
            <person name="Straley S.C."/>
            <person name="McDonough K.A."/>
            <person name="Nilles M.L."/>
            <person name="Matson J.S."/>
            <person name="Blattner F.R."/>
            <person name="Perry R.D."/>
        </authorList>
    </citation>
    <scope>NUCLEOTIDE SEQUENCE [LARGE SCALE GENOMIC DNA]</scope>
    <source>
        <strain>KIM10+ / Biovar Mediaevalis</strain>
    </source>
</reference>
<reference key="3">
    <citation type="journal article" date="2004" name="DNA Res.">
        <title>Complete genome sequence of Yersinia pestis strain 91001, an isolate avirulent to humans.</title>
        <authorList>
            <person name="Song Y."/>
            <person name="Tong Z."/>
            <person name="Wang J."/>
            <person name="Wang L."/>
            <person name="Guo Z."/>
            <person name="Han Y."/>
            <person name="Zhang J."/>
            <person name="Pei D."/>
            <person name="Zhou D."/>
            <person name="Qin H."/>
            <person name="Pang X."/>
            <person name="Han Y."/>
            <person name="Zhai J."/>
            <person name="Li M."/>
            <person name="Cui B."/>
            <person name="Qi Z."/>
            <person name="Jin L."/>
            <person name="Dai R."/>
            <person name="Chen F."/>
            <person name="Li S."/>
            <person name="Ye C."/>
            <person name="Du Z."/>
            <person name="Lin W."/>
            <person name="Wang J."/>
            <person name="Yu J."/>
            <person name="Yang H."/>
            <person name="Wang J."/>
            <person name="Huang P."/>
            <person name="Yang R."/>
        </authorList>
    </citation>
    <scope>NUCLEOTIDE SEQUENCE [LARGE SCALE GENOMIC DNA]</scope>
    <source>
        <strain>91001 / Biovar Mediaevalis</strain>
    </source>
</reference>